<keyword id="KW-0456">Lyase</keyword>
<keyword id="KW-0501">Molybdenum cofactor biosynthesis</keyword>
<keyword id="KW-1185">Reference proteome</keyword>
<dbReference type="EC" id="4.6.1.17" evidence="1"/>
<dbReference type="EMBL" id="CP000930">
    <property type="protein sequence ID" value="ABZ82688.1"/>
    <property type="molecule type" value="Genomic_DNA"/>
</dbReference>
<dbReference type="RefSeq" id="WP_012281237.1">
    <property type="nucleotide sequence ID" value="NC_010337.2"/>
</dbReference>
<dbReference type="SMR" id="B0TI15"/>
<dbReference type="STRING" id="498761.HM1_0063"/>
<dbReference type="KEGG" id="hmo:HM1_0063"/>
<dbReference type="eggNOG" id="COG0315">
    <property type="taxonomic scope" value="Bacteria"/>
</dbReference>
<dbReference type="HOGENOM" id="CLU_074693_1_1_9"/>
<dbReference type="OrthoDB" id="9794429at2"/>
<dbReference type="UniPathway" id="UPA00344"/>
<dbReference type="Proteomes" id="UP000008550">
    <property type="component" value="Chromosome"/>
</dbReference>
<dbReference type="GO" id="GO:0061799">
    <property type="term" value="F:cyclic pyranopterin monophosphate synthase activity"/>
    <property type="evidence" value="ECO:0007669"/>
    <property type="project" value="UniProtKB-UniRule"/>
</dbReference>
<dbReference type="GO" id="GO:0006777">
    <property type="term" value="P:Mo-molybdopterin cofactor biosynthetic process"/>
    <property type="evidence" value="ECO:0007669"/>
    <property type="project" value="UniProtKB-UniRule"/>
</dbReference>
<dbReference type="CDD" id="cd01420">
    <property type="entry name" value="MoaC_PE"/>
    <property type="match status" value="1"/>
</dbReference>
<dbReference type="Gene3D" id="3.30.70.640">
    <property type="entry name" value="Molybdopterin cofactor biosynthesis C (MoaC) domain"/>
    <property type="match status" value="1"/>
</dbReference>
<dbReference type="HAMAP" id="MF_01224_B">
    <property type="entry name" value="MoaC_B"/>
    <property type="match status" value="1"/>
</dbReference>
<dbReference type="InterPro" id="IPR023045">
    <property type="entry name" value="MoaC"/>
</dbReference>
<dbReference type="InterPro" id="IPR047594">
    <property type="entry name" value="MoaC_bact/euk"/>
</dbReference>
<dbReference type="InterPro" id="IPR036522">
    <property type="entry name" value="MoaC_sf"/>
</dbReference>
<dbReference type="InterPro" id="IPR050105">
    <property type="entry name" value="MoCo_biosynth_MoaA/MoaC"/>
</dbReference>
<dbReference type="InterPro" id="IPR002820">
    <property type="entry name" value="Mopterin_CF_biosynth-C_dom"/>
</dbReference>
<dbReference type="NCBIfam" id="TIGR00581">
    <property type="entry name" value="moaC"/>
    <property type="match status" value="1"/>
</dbReference>
<dbReference type="NCBIfam" id="NF006870">
    <property type="entry name" value="PRK09364.1"/>
    <property type="match status" value="1"/>
</dbReference>
<dbReference type="PANTHER" id="PTHR22960:SF29">
    <property type="entry name" value="CYCLIC PYRANOPTERIN MONOPHOSPHATE SYNTHASE"/>
    <property type="match status" value="1"/>
</dbReference>
<dbReference type="PANTHER" id="PTHR22960">
    <property type="entry name" value="MOLYBDOPTERIN COFACTOR SYNTHESIS PROTEIN A"/>
    <property type="match status" value="1"/>
</dbReference>
<dbReference type="Pfam" id="PF01967">
    <property type="entry name" value="MoaC"/>
    <property type="match status" value="1"/>
</dbReference>
<dbReference type="SUPFAM" id="SSF55040">
    <property type="entry name" value="Molybdenum cofactor biosynthesis protein C, MoaC"/>
    <property type="match status" value="1"/>
</dbReference>
<name>MOAC_HELMI</name>
<protein>
    <recommendedName>
        <fullName evidence="1">Cyclic pyranopterin monophosphate synthase</fullName>
        <ecNumber evidence="1">4.6.1.17</ecNumber>
    </recommendedName>
    <alternativeName>
        <fullName evidence="1">Molybdenum cofactor biosynthesis protein C</fullName>
    </alternativeName>
</protein>
<feature type="chain" id="PRO_1000164892" description="Cyclic pyranopterin monophosphate synthase">
    <location>
        <begin position="1"/>
        <end position="159"/>
    </location>
</feature>
<feature type="active site" evidence="1">
    <location>
        <position position="128"/>
    </location>
</feature>
<feature type="binding site" evidence="1">
    <location>
        <begin position="75"/>
        <end position="77"/>
    </location>
    <ligand>
        <name>substrate</name>
    </ligand>
</feature>
<feature type="binding site" evidence="1">
    <location>
        <begin position="113"/>
        <end position="114"/>
    </location>
    <ligand>
        <name>substrate</name>
    </ligand>
</feature>
<comment type="function">
    <text evidence="1">Catalyzes the conversion of (8S)-3',8-cyclo-7,8-dihydroguanosine 5'-triphosphate to cyclic pyranopterin monophosphate (cPMP).</text>
</comment>
<comment type="catalytic activity">
    <reaction evidence="1">
        <text>(8S)-3',8-cyclo-7,8-dihydroguanosine 5'-triphosphate = cyclic pyranopterin phosphate + diphosphate</text>
        <dbReference type="Rhea" id="RHEA:49580"/>
        <dbReference type="ChEBI" id="CHEBI:33019"/>
        <dbReference type="ChEBI" id="CHEBI:59648"/>
        <dbReference type="ChEBI" id="CHEBI:131766"/>
        <dbReference type="EC" id="4.6.1.17"/>
    </reaction>
</comment>
<comment type="pathway">
    <text evidence="1">Cofactor biosynthesis; molybdopterin biosynthesis.</text>
</comment>
<comment type="subunit">
    <text evidence="1">Homohexamer; trimer of dimers.</text>
</comment>
<comment type="similarity">
    <text evidence="1">Belongs to the MoaC family.</text>
</comment>
<organism>
    <name type="scientific">Heliobacterium modesticaldum (strain ATCC 51547 / Ice1)</name>
    <dbReference type="NCBI Taxonomy" id="498761"/>
    <lineage>
        <taxon>Bacteria</taxon>
        <taxon>Bacillati</taxon>
        <taxon>Bacillota</taxon>
        <taxon>Clostridia</taxon>
        <taxon>Eubacteriales</taxon>
        <taxon>Heliobacteriaceae</taxon>
        <taxon>Heliomicrobium</taxon>
    </lineage>
</organism>
<accession>B0TI15</accession>
<evidence type="ECO:0000255" key="1">
    <source>
        <dbReference type="HAMAP-Rule" id="MF_01224"/>
    </source>
</evidence>
<reference key="1">
    <citation type="journal article" date="2008" name="J. Bacteriol.">
        <title>The genome of Heliobacterium modesticaldum, a phototrophic representative of the Firmicutes containing the simplest photosynthetic apparatus.</title>
        <authorList>
            <person name="Sattley W.M."/>
            <person name="Madigan M.T."/>
            <person name="Swingley W.D."/>
            <person name="Cheung P.C."/>
            <person name="Clocksin K.M."/>
            <person name="Conrad A.L."/>
            <person name="Dejesa L.C."/>
            <person name="Honchak B.M."/>
            <person name="Jung D.O."/>
            <person name="Karbach L.E."/>
            <person name="Kurdoglu A."/>
            <person name="Lahiri S."/>
            <person name="Mastrian S.D."/>
            <person name="Page L.E."/>
            <person name="Taylor H.L."/>
            <person name="Wang Z.T."/>
            <person name="Raymond J."/>
            <person name="Chen M."/>
            <person name="Blankenship R.E."/>
            <person name="Touchman J.W."/>
        </authorList>
    </citation>
    <scope>NUCLEOTIDE SEQUENCE [LARGE SCALE GENOMIC DNA]</scope>
    <source>
        <strain>ATCC 51547 / Ice1</strain>
    </source>
</reference>
<sequence length="159" mass="17477">MDPLTHFDEKGGARMVDVSLKGDTRREAVARGRVLMHRDTFRRVRDGQIAKGDVLAVARLAGIMAAKRTSDLIPLCHPLSLTGVDLHFTLDELHSTVEIESRVKTTGKTGVEMEALTAVSVAALTIYDMCKAMDKNMVVSDIRLVEKTGGKSGHYIREE</sequence>
<proteinExistence type="inferred from homology"/>
<gene>
    <name evidence="1" type="primary">moaC</name>
    <name type="ordered locus">Helmi_00630</name>
    <name type="ORF">HM1_0063</name>
</gene>